<dbReference type="EMBL" id="X00474">
    <property type="protein sequence ID" value="CAA25155.1"/>
    <property type="molecule type" value="mRNA"/>
</dbReference>
<dbReference type="EMBL" id="M12075">
    <property type="protein sequence ID" value="AAA52402.1"/>
    <property type="molecule type" value="mRNA"/>
</dbReference>
<dbReference type="EMBL" id="X05030">
    <property type="protein sequence ID" value="CAA28695.1"/>
    <property type="molecule type" value="Genomic_DNA"/>
</dbReference>
<dbReference type="EMBL" id="X05321">
    <property type="protein sequence ID" value="CAA28695.1"/>
    <property type="status" value="JOINED"/>
    <property type="molecule type" value="Genomic_DNA"/>
</dbReference>
<dbReference type="EMBL" id="X05322">
    <property type="protein sequence ID" value="CAA28695.1"/>
    <property type="status" value="JOINED"/>
    <property type="molecule type" value="Genomic_DNA"/>
</dbReference>
<dbReference type="EMBL" id="X52003">
    <property type="protein sequence ID" value="CAA36254.1"/>
    <property type="molecule type" value="mRNA"/>
</dbReference>
<dbReference type="EMBL" id="AB038162">
    <property type="protein sequence ID" value="BAB13729.1"/>
    <property type="molecule type" value="Genomic_DNA"/>
</dbReference>
<dbReference type="EMBL" id="AP001746">
    <property type="protein sequence ID" value="BAA95532.1"/>
    <property type="molecule type" value="Genomic_DNA"/>
</dbReference>
<dbReference type="EMBL" id="BC032811">
    <property type="protein sequence ID" value="AAH32811.1"/>
    <property type="molecule type" value="mRNA"/>
</dbReference>
<dbReference type="CCDS" id="CCDS13685.1"/>
<dbReference type="PIR" id="A26667">
    <property type="entry name" value="A26667"/>
</dbReference>
<dbReference type="RefSeq" id="NP_003216.1">
    <property type="nucleotide sequence ID" value="NM_003225.3"/>
</dbReference>
<dbReference type="PDB" id="1HI7">
    <property type="method" value="NMR"/>
    <property type="chains" value="A/B=25-84"/>
</dbReference>
<dbReference type="PDB" id="1PS2">
    <property type="method" value="NMR"/>
    <property type="chains" value="A=25-84"/>
</dbReference>
<dbReference type="PDB" id="6V1D">
    <property type="method" value="X-ray"/>
    <property type="resolution" value="2.40 A"/>
    <property type="chains" value="A/B/C=27-74"/>
</dbReference>
<dbReference type="PDBsum" id="1HI7"/>
<dbReference type="PDBsum" id="1PS2"/>
<dbReference type="PDBsum" id="6V1D"/>
<dbReference type="BMRB" id="P04155"/>
<dbReference type="SMR" id="P04155"/>
<dbReference type="BioGRID" id="112889">
    <property type="interactions" value="28"/>
</dbReference>
<dbReference type="FunCoup" id="P04155">
    <property type="interactions" value="356"/>
</dbReference>
<dbReference type="IntAct" id="P04155">
    <property type="interactions" value="19"/>
</dbReference>
<dbReference type="MINT" id="P04155"/>
<dbReference type="STRING" id="9606.ENSP00000291527"/>
<dbReference type="DrugBank" id="DB04468">
    <property type="generic name" value="Afimoxifene"/>
</dbReference>
<dbReference type="DrugBank" id="DB00481">
    <property type="generic name" value="Raloxifene"/>
</dbReference>
<dbReference type="UniLectin" id="P04155"/>
<dbReference type="GlyGen" id="P04155">
    <property type="glycosylation" value="1 site, 1 O-linked glycan (1 site)"/>
</dbReference>
<dbReference type="BioMuta" id="TFF1"/>
<dbReference type="DMDM" id="131127"/>
<dbReference type="MassIVE" id="P04155"/>
<dbReference type="PaxDb" id="9606-ENSP00000291527"/>
<dbReference type="PeptideAtlas" id="P04155"/>
<dbReference type="ProteomicsDB" id="51666"/>
<dbReference type="Antibodypedia" id="1095">
    <property type="antibodies" value="1032 antibodies from 38 providers"/>
</dbReference>
<dbReference type="DNASU" id="7031"/>
<dbReference type="Ensembl" id="ENST00000291527.3">
    <property type="protein sequence ID" value="ENSP00000291527.2"/>
    <property type="gene ID" value="ENSG00000160182.3"/>
</dbReference>
<dbReference type="GeneID" id="7031"/>
<dbReference type="KEGG" id="hsa:7031"/>
<dbReference type="MANE-Select" id="ENST00000291527.3">
    <property type="protein sequence ID" value="ENSP00000291527.2"/>
    <property type="RefSeq nucleotide sequence ID" value="NM_003225.3"/>
    <property type="RefSeq protein sequence ID" value="NP_003216.1"/>
</dbReference>
<dbReference type="UCSC" id="uc002zax.2">
    <property type="organism name" value="human"/>
</dbReference>
<dbReference type="AGR" id="HGNC:11755"/>
<dbReference type="CTD" id="7031"/>
<dbReference type="DisGeNET" id="7031"/>
<dbReference type="GeneCards" id="TFF1"/>
<dbReference type="HGNC" id="HGNC:11755">
    <property type="gene designation" value="TFF1"/>
</dbReference>
<dbReference type="HPA" id="ENSG00000160182">
    <property type="expression patterns" value="Tissue enriched (stomach)"/>
</dbReference>
<dbReference type="MIM" id="113710">
    <property type="type" value="gene"/>
</dbReference>
<dbReference type="neXtProt" id="NX_P04155"/>
<dbReference type="OpenTargets" id="ENSG00000160182"/>
<dbReference type="PharmGKB" id="PA36470"/>
<dbReference type="VEuPathDB" id="HostDB:ENSG00000160182"/>
<dbReference type="eggNOG" id="ENOG502S00P">
    <property type="taxonomic scope" value="Eukaryota"/>
</dbReference>
<dbReference type="GeneTree" id="ENSGT00940000162623"/>
<dbReference type="HOGENOM" id="CLU_179440_1_0_1"/>
<dbReference type="InParanoid" id="P04155"/>
<dbReference type="OMA" id="FPWCFHP"/>
<dbReference type="OrthoDB" id="10051464at2759"/>
<dbReference type="PAN-GO" id="P04155">
    <property type="GO annotations" value="2 GO annotations based on evolutionary models"/>
</dbReference>
<dbReference type="PhylomeDB" id="P04155"/>
<dbReference type="TreeFam" id="TF336092"/>
<dbReference type="PathwayCommons" id="P04155"/>
<dbReference type="Reactome" id="R-HSA-9018519">
    <property type="pathway name" value="Estrogen-dependent gene expression"/>
</dbReference>
<dbReference type="SignaLink" id="P04155"/>
<dbReference type="SIGNOR" id="P04155"/>
<dbReference type="BioGRID-ORCS" id="7031">
    <property type="hits" value="14 hits in 1158 CRISPR screens"/>
</dbReference>
<dbReference type="ChiTaRS" id="TFF1">
    <property type="organism name" value="human"/>
</dbReference>
<dbReference type="EvolutionaryTrace" id="P04155"/>
<dbReference type="GeneWiki" id="Trefoil_factor_1"/>
<dbReference type="GenomeRNAi" id="7031"/>
<dbReference type="Pharos" id="P04155">
    <property type="development level" value="Tbio"/>
</dbReference>
<dbReference type="PRO" id="PR:P04155"/>
<dbReference type="Proteomes" id="UP000005640">
    <property type="component" value="Chromosome 21"/>
</dbReference>
<dbReference type="RNAct" id="P04155">
    <property type="molecule type" value="protein"/>
</dbReference>
<dbReference type="Bgee" id="ENSG00000160182">
    <property type="expression patterns" value="Expressed in pancreatic ductal cell and 129 other cell types or tissues"/>
</dbReference>
<dbReference type="GO" id="GO:0005576">
    <property type="term" value="C:extracellular region"/>
    <property type="evidence" value="ECO:0000304"/>
    <property type="project" value="Reactome"/>
</dbReference>
<dbReference type="GO" id="GO:0005615">
    <property type="term" value="C:extracellular space"/>
    <property type="evidence" value="ECO:0000318"/>
    <property type="project" value="GO_Central"/>
</dbReference>
<dbReference type="GO" id="GO:0008083">
    <property type="term" value="F:growth factor activity"/>
    <property type="evidence" value="ECO:0007669"/>
    <property type="project" value="UniProtKB-KW"/>
</dbReference>
<dbReference type="GO" id="GO:0005975">
    <property type="term" value="P:carbohydrate metabolic process"/>
    <property type="evidence" value="ECO:0000304"/>
    <property type="project" value="ProtInc"/>
</dbReference>
<dbReference type="GO" id="GO:0030154">
    <property type="term" value="P:cell differentiation"/>
    <property type="evidence" value="ECO:0007669"/>
    <property type="project" value="Ensembl"/>
</dbReference>
<dbReference type="GO" id="GO:0008283">
    <property type="term" value="P:cell population proliferation"/>
    <property type="evidence" value="ECO:0007669"/>
    <property type="project" value="Ensembl"/>
</dbReference>
<dbReference type="GO" id="GO:0030277">
    <property type="term" value="P:maintenance of gastrointestinal epithelium"/>
    <property type="evidence" value="ECO:0000318"/>
    <property type="project" value="GO_Central"/>
</dbReference>
<dbReference type="GO" id="GO:0008285">
    <property type="term" value="P:negative regulation of cell population proliferation"/>
    <property type="evidence" value="ECO:0007669"/>
    <property type="project" value="Ensembl"/>
</dbReference>
<dbReference type="GO" id="GO:0035902">
    <property type="term" value="P:response to immobilization stress"/>
    <property type="evidence" value="ECO:0007669"/>
    <property type="project" value="Ensembl"/>
</dbReference>
<dbReference type="GO" id="GO:0010039">
    <property type="term" value="P:response to iron ion"/>
    <property type="evidence" value="ECO:0007669"/>
    <property type="project" value="Ensembl"/>
</dbReference>
<dbReference type="GO" id="GO:0043434">
    <property type="term" value="P:response to peptide hormone"/>
    <property type="evidence" value="ECO:0007669"/>
    <property type="project" value="Ensembl"/>
</dbReference>
<dbReference type="CDD" id="cd00111">
    <property type="entry name" value="Trefoil"/>
    <property type="match status" value="1"/>
</dbReference>
<dbReference type="FunFam" id="4.10.110.10:FF:000001">
    <property type="entry name" value="Trefoil factor 3"/>
    <property type="match status" value="1"/>
</dbReference>
<dbReference type="Gene3D" id="4.10.110.10">
    <property type="entry name" value="Spasmolytic Protein, domain 1"/>
    <property type="match status" value="1"/>
</dbReference>
<dbReference type="InterPro" id="IPR017994">
    <property type="entry name" value="P_trefoil_chordata"/>
</dbReference>
<dbReference type="InterPro" id="IPR017957">
    <property type="entry name" value="P_trefoil_CS"/>
</dbReference>
<dbReference type="InterPro" id="IPR000519">
    <property type="entry name" value="P_trefoil_dom"/>
</dbReference>
<dbReference type="InterPro" id="IPR044913">
    <property type="entry name" value="P_trefoil_dom_sf"/>
</dbReference>
<dbReference type="PANTHER" id="PTHR13826">
    <property type="entry name" value="INTESTINAL TREFOIL FACTOR-RELATED"/>
    <property type="match status" value="1"/>
</dbReference>
<dbReference type="PANTHER" id="PTHR13826:SF18">
    <property type="entry name" value="TREFOIL FACTOR 1"/>
    <property type="match status" value="1"/>
</dbReference>
<dbReference type="Pfam" id="PF00088">
    <property type="entry name" value="Trefoil"/>
    <property type="match status" value="1"/>
</dbReference>
<dbReference type="PRINTS" id="PR00680">
    <property type="entry name" value="PTREFOIL"/>
</dbReference>
<dbReference type="SMART" id="SM00018">
    <property type="entry name" value="PD"/>
    <property type="match status" value="1"/>
</dbReference>
<dbReference type="SUPFAM" id="SSF57492">
    <property type="entry name" value="Trefoil"/>
    <property type="match status" value="1"/>
</dbReference>
<dbReference type="PROSITE" id="PS00025">
    <property type="entry name" value="P_TREFOIL_1"/>
    <property type="match status" value="1"/>
</dbReference>
<dbReference type="PROSITE" id="PS51448">
    <property type="entry name" value="P_TREFOIL_2"/>
    <property type="match status" value="1"/>
</dbReference>
<keyword id="KW-0002">3D-structure</keyword>
<keyword id="KW-0903">Direct protein sequencing</keyword>
<keyword id="KW-1015">Disulfide bond</keyword>
<keyword id="KW-0339">Growth factor</keyword>
<keyword id="KW-1267">Proteomics identification</keyword>
<keyword id="KW-1185">Reference proteome</keyword>
<keyword id="KW-0964">Secreted</keyword>
<keyword id="KW-0732">Signal</keyword>
<name>TFF1_HUMAN</name>
<proteinExistence type="evidence at protein level"/>
<gene>
    <name type="primary">TFF1</name>
    <name type="synonym">BCEI</name>
    <name type="synonym">PS2</name>
</gene>
<accession>P04155</accession>
<evidence type="ECO:0000255" key="1">
    <source>
        <dbReference type="PROSITE-ProRule" id="PRU00779"/>
    </source>
</evidence>
<evidence type="ECO:0000269" key="2">
    <source>
    </source>
</evidence>
<evidence type="ECO:0000269" key="3">
    <source>
    </source>
</evidence>
<evidence type="ECO:0000269" key="4">
    <source>
    </source>
</evidence>
<evidence type="ECO:0000269" key="5">
    <source>
    </source>
</evidence>
<evidence type="ECO:0000269" key="6">
    <source>
    </source>
</evidence>
<evidence type="ECO:0000269" key="7">
    <source>
    </source>
</evidence>
<evidence type="ECO:0000269" key="8">
    <source>
    </source>
</evidence>
<evidence type="ECO:0000269" key="9">
    <source>
    </source>
</evidence>
<evidence type="ECO:0000269" key="10">
    <source>
    </source>
</evidence>
<evidence type="ECO:0000269" key="11">
    <source>
    </source>
</evidence>
<evidence type="ECO:0000269" key="12">
    <source>
    </source>
</evidence>
<evidence type="ECO:0000269" key="13">
    <source>
    </source>
</evidence>
<evidence type="ECO:0007829" key="14">
    <source>
        <dbReference type="PDB" id="1HI7"/>
    </source>
</evidence>
<evidence type="ECO:0007829" key="15">
    <source>
        <dbReference type="PDB" id="6V1D"/>
    </source>
</evidence>
<feature type="signal peptide" evidence="3 4 5 11 12">
    <location>
        <begin position="1"/>
        <end position="24"/>
    </location>
</feature>
<feature type="chain" id="PRO_0000023456" description="Trefoil factor 1">
    <location>
        <begin position="25"/>
        <end position="84"/>
    </location>
</feature>
<feature type="domain" description="P-type" evidence="1">
    <location>
        <begin position="29"/>
        <end position="72"/>
    </location>
</feature>
<feature type="disulfide bond">
    <location>
        <begin position="31"/>
        <end position="57"/>
    </location>
</feature>
<feature type="disulfide bond">
    <location>
        <begin position="41"/>
        <end position="56"/>
    </location>
</feature>
<feature type="disulfide bond">
    <location>
        <begin position="51"/>
        <end position="68"/>
    </location>
</feature>
<feature type="sequence variant" id="VAR_053563" description="In dbSNP:rs34795821.">
    <original>T</original>
    <variation>I</variation>
    <location>
        <position position="22"/>
    </location>
</feature>
<feature type="sequence variant" id="VAR_015281" description="In a gastric carcinoma sample; somatic mutation; dbSNP:rs2052255655." evidence="2">
    <original>T</original>
    <variation>I</variation>
    <location>
        <position position="32"/>
    </location>
</feature>
<feature type="sequence variant" id="VAR_015282" description="In a gastric carcinoma sample; somatic mutation." evidence="2">
    <original>T</original>
    <variation>K</variation>
    <location>
        <position position="32"/>
    </location>
</feature>
<feature type="sequence variant" id="VAR_015283" description="In a gastric carcinoma sample; somatic mutation; abolishes inhibition of gastric cancer cell growth; abolishes inhibition of apoptosis in gasterointestinal epithelial cells; increases invasive activity in epithelial cells; dbSNP:rs961505229." evidence="2 6">
    <original>A</original>
    <variation>D</variation>
    <location>
        <position position="34"/>
    </location>
</feature>
<feature type="sequence variant" id="VAR_015284" description="In a gastric carcinoma sample; somatic mutation; abolishes inhibition of gastric cancer cell growth; abolishes inhibition of apoptosis in gasterointestinal epithelial cells; increases invasive activity in epithelial cells." evidence="2 6">
    <original>E</original>
    <variation>K</variation>
    <location>
        <position position="37"/>
    </location>
</feature>
<feature type="sequence variant" id="VAR_015285" description="In a gastric adenoma sample; somatic mutation." evidence="2">
    <original>V</original>
    <variation>I</variation>
    <location>
        <position position="46"/>
    </location>
</feature>
<feature type="sequence variant" id="VAR_015286" description="In a gastric carcinoma sample; somatic mutation; dbSNP:rs1203145163." evidence="2">
    <original>G</original>
    <variation>V</variation>
    <location>
        <position position="55"/>
    </location>
</feature>
<feature type="mutagenesis site" description="Abolishes inhibition of gastric cancer cell growth." evidence="6">
    <original>C</original>
    <variation>S</variation>
    <location>
        <position position="82"/>
    </location>
</feature>
<feature type="strand" evidence="15">
    <location>
        <begin position="29"/>
        <end position="31"/>
    </location>
</feature>
<feature type="helix" evidence="15">
    <location>
        <begin position="35"/>
        <end position="37"/>
    </location>
</feature>
<feature type="strand" evidence="14">
    <location>
        <begin position="40"/>
        <end position="42"/>
    </location>
</feature>
<feature type="helix" evidence="15">
    <location>
        <begin position="48"/>
        <end position="53"/>
    </location>
</feature>
<feature type="strand" evidence="14">
    <location>
        <begin position="61"/>
        <end position="65"/>
    </location>
</feature>
<feature type="strand" evidence="15">
    <location>
        <begin position="67"/>
        <end position="69"/>
    </location>
</feature>
<feature type="strand" evidence="14">
    <location>
        <begin position="72"/>
        <end position="74"/>
    </location>
</feature>
<feature type="strand" evidence="14">
    <location>
        <begin position="79"/>
        <end position="82"/>
    </location>
</feature>
<sequence>MATMENKVICALVLVSMLALGTLAEAQTETCTVAPRERQNCGFPGVTPSQCANKGCCFDDTVRGVPWCFYPNTIDVPPEEECEF</sequence>
<protein>
    <recommendedName>
        <fullName>Trefoil factor 1</fullName>
    </recommendedName>
    <alternativeName>
        <fullName>Breast cancer estrogen-inducible protein</fullName>
    </alternativeName>
    <alternativeName>
        <fullName>PNR-2</fullName>
    </alternativeName>
    <alternativeName>
        <fullName>Polypeptide P1.A</fullName>
        <shortName>hP1.A</shortName>
    </alternativeName>
    <alternativeName>
        <fullName>Protein pS2</fullName>
    </alternativeName>
</protein>
<comment type="function">
    <text evidence="5">Stabilizer of the mucous gel overlying the gastrointestinal mucosa that provides a physical barrier against various noxious agents. May inhibit the growth of calcium oxalate crystals in urine.</text>
</comment>
<comment type="subunit">
    <text>Heterodimer with GKN2; disulfide linked.</text>
</comment>
<comment type="interaction">
    <interactant intactId="EBI-743871">
        <id>P04155</id>
    </interactant>
    <interactant intactId="EBI-2809309">
        <id>O00481</id>
        <label>BTN3A1</label>
    </interactant>
    <organismsDiffer>false</organismsDiffer>
    <experiments>3</experiments>
</comment>
<comment type="interaction">
    <interactant intactId="EBI-743871">
        <id>P04155</id>
    </interactant>
    <interactant intactId="EBI-4314379">
        <id>Q6UX41</id>
        <label>BTNL8</label>
    </interactant>
    <organismsDiffer>false</organismsDiffer>
    <experiments>3</experiments>
</comment>
<comment type="interaction">
    <interactant intactId="EBI-743871">
        <id>P04155</id>
    </interactant>
    <interactant intactId="EBI-4314468">
        <id>Q6UXZ3</id>
        <label>CD300LD</label>
    </interactant>
    <organismsDiffer>false</organismsDiffer>
    <experiments>3</experiments>
</comment>
<comment type="interaction">
    <interactant intactId="EBI-743871">
        <id>P04155</id>
    </interactant>
    <interactant intactId="EBI-4314687">
        <id>Q96PJ5</id>
        <label>FCRL4</label>
    </interactant>
    <organismsDiffer>false</organismsDiffer>
    <experiments>3</experiments>
</comment>
<comment type="interaction">
    <interactant intactId="EBI-743871">
        <id>P04155</id>
    </interactant>
    <interactant intactId="EBI-10986212">
        <id>Q92508</id>
        <label>PIEZO1</label>
    </interactant>
    <organismsDiffer>false</organismsDiffer>
    <experiments>5</experiments>
</comment>
<comment type="interaction">
    <interactant intactId="EBI-743871">
        <id>P04155</id>
    </interactant>
    <interactant intactId="EBI-744081">
        <id>Q96EQ0</id>
        <label>SGTB</label>
    </interactant>
    <organismsDiffer>false</organismsDiffer>
    <experiments>5</experiments>
</comment>
<comment type="interaction">
    <interactant intactId="EBI-743871">
        <id>P04155</id>
    </interactant>
    <interactant intactId="EBI-4314991">
        <id>Q9NYZ4</id>
        <label>SIGLEC8</label>
    </interactant>
    <organismsDiffer>false</organismsDiffer>
    <experiments>3</experiments>
</comment>
<comment type="interaction">
    <interactant intactId="EBI-743871">
        <id>P04155</id>
    </interactant>
    <interactant intactId="EBI-741480">
        <id>Q9UMX0</id>
        <label>UBQLN1</label>
    </interactant>
    <organismsDiffer>false</organismsDiffer>
    <experiments>6</experiments>
</comment>
<comment type="interaction">
    <interactant intactId="EBI-743871">
        <id>P04155</id>
    </interactant>
    <interactant intactId="EBI-740943">
        <id>P62760</id>
        <label>VSNL1</label>
    </interactant>
    <organismsDiffer>false</organismsDiffer>
    <experiments>3</experiments>
</comment>
<comment type="interaction">
    <interactant intactId="EBI-743871">
        <id>P04155</id>
    </interactant>
    <interactant intactId="EBI-10177272">
        <id>P15622-3</id>
        <label>ZNF250</label>
    </interactant>
    <organismsDiffer>false</organismsDiffer>
    <experiments>3</experiments>
</comment>
<comment type="subcellular location">
    <subcellularLocation>
        <location evidence="4 10">Secreted</location>
    </subcellularLocation>
</comment>
<comment type="tissue specificity">
    <text evidence="4 5 7 8 9 10 13">Found in stomach, with highest levels in the upper gastric mucosal cells (at protein level). Detected in goblet cells of the small and large intestine and rectum, small submucosal glands in the esophagus, mucous acini of the sublingual gland, submucosal glands of the trachea, and epithelial cells lining the exocrine pancreatic ducts but not in the remainder of the pancreas (at protein level). Scattered expression is detected in the epithelial cells of the gallbladder and submucosal glands of the vagina, and weak expression is observed in the bronchial goblet cells of the pseudostratified epithelia in the respiratory system (at protein level). Detected in urine (at protein level). Strongly expressed in breast cancer but at low levels in normal mammary tissue. It is regulated by estrogen in MCF-7 cells. Strong expression found in normal gastric mucosa and in the regenerative tissues surrounding ulcerous lesions of gastrointestinal tract, but lower expression found in gastric cancer (at protein level).</text>
</comment>
<comment type="online information" name="Atlas of Genetics and Cytogenetics in Oncology and Haematology">
    <link uri="https://atlasgeneticsoncology.org/gene/201/TFF1"/>
</comment>
<reference key="1">
    <citation type="journal article" date="1984" name="Nucleic Acids Res.">
        <title>Sequence of the pS2 mRNA induced by estrogen in the human breast cancer cell line MCF-7.</title>
        <authorList>
            <person name="Jakowlew S.B."/>
            <person name="Breathnach R."/>
            <person name="Jeltsch J.-M."/>
            <person name="Masiakowski P."/>
            <person name="Chambon P."/>
        </authorList>
    </citation>
    <scope>NUCLEOTIDE SEQUENCE [MRNA]</scope>
</reference>
<reference key="2">
    <citation type="journal article" date="1985" name="DNA">
        <title>Cloning of a gene expressed in human breast cancer and regulated by estrogen in MCF-7 cells.</title>
        <authorList>
            <person name="Prud'Homme J.-F."/>
            <person name="Fridlansky F."/>
            <person name="le Cunff M."/>
            <person name="Atger M."/>
            <person name="Mercier-Bodart C."/>
            <person name="Pichon M.-F."/>
            <person name="Milgrom E."/>
        </authorList>
    </citation>
    <scope>NUCLEOTIDE SEQUENCE [MRNA]</scope>
    <scope>TISSUE SPECIFICITY</scope>
    <source>
        <tissue>Mammary cancer</tissue>
    </source>
</reference>
<reference key="3">
    <citation type="journal article" date="1987" name="Nucleic Acids Res.">
        <title>Structure of the human oestrogen-responsive gene pS2.</title>
        <authorList>
            <person name="Jeltsch J.-M."/>
            <person name="Roberts M."/>
            <person name="Schatz C."/>
            <person name="Garnier J.-M."/>
            <person name="Brown A.M.C."/>
            <person name="Chambon P."/>
        </authorList>
    </citation>
    <scope>NUCLEOTIDE SEQUENCE [GENOMIC DNA]</scope>
</reference>
<reference key="4">
    <citation type="journal article" date="1990" name="FEBS Lett.">
        <title>Expression of the pS2 gene in human gastric cancer cells derived from poorly differentiated adenocarcinoma.</title>
        <authorList>
            <person name="Takahashi H."/>
            <person name="Kida N."/>
            <person name="Fujii R."/>
            <person name="Tanaka K."/>
            <person name="Ohta M."/>
            <person name="Mori K."/>
            <person name="Hayashi K."/>
        </authorList>
    </citation>
    <scope>NUCLEOTIDE SEQUENCE [MRNA]</scope>
    <source>
        <tissue>Gastric carcinoma</tissue>
    </source>
</reference>
<reference key="5">
    <citation type="journal article" date="1990" name="J. Biochem.">
        <title>Complete primary structure of the human estrogen-responsive gene (pS2) product.</title>
        <authorList>
            <person name="Mori K."/>
            <person name="Fujii R."/>
            <person name="Kida N."/>
            <person name="Takahashi H."/>
            <person name="Ohkubo S."/>
            <person name="Fujino M."/>
            <person name="Ohta M."/>
            <person name="Hayashi K."/>
        </authorList>
    </citation>
    <scope>NUCLEOTIDE SEQUENCE [MRNA]</scope>
</reference>
<reference key="6">
    <citation type="journal article" date="2000" name="Genomics">
        <title>Refined localization of autosomal recessive nonsyndromic deafness DFNB10 locus using 34 novel microsatellite markers, genomic structure, and exclusion of six known genes in the region.</title>
        <authorList>
            <person name="Berry A."/>
            <person name="Scott H.S."/>
            <person name="Kudoh J."/>
            <person name="Talior I."/>
            <person name="Korostishevsky M."/>
            <person name="Wattenhofer M."/>
            <person name="Guipponi M."/>
            <person name="Barras C."/>
            <person name="Rossier C."/>
            <person name="Shibuya K."/>
            <person name="Wang J."/>
            <person name="Kawasaki K."/>
            <person name="Asakawa S."/>
            <person name="Minoshima S."/>
            <person name="Shimizu N."/>
            <person name="Antonarakis S.E."/>
            <person name="Bonne-Tamir B."/>
        </authorList>
    </citation>
    <scope>NUCLEOTIDE SEQUENCE [GENOMIC DNA]</scope>
</reference>
<reference key="7">
    <citation type="journal article" date="2000" name="Nature">
        <title>The DNA sequence of human chromosome 21.</title>
        <authorList>
            <person name="Hattori M."/>
            <person name="Fujiyama A."/>
            <person name="Taylor T.D."/>
            <person name="Watanabe H."/>
            <person name="Yada T."/>
            <person name="Park H.-S."/>
            <person name="Toyoda A."/>
            <person name="Ishii K."/>
            <person name="Totoki Y."/>
            <person name="Choi D.-K."/>
            <person name="Groner Y."/>
            <person name="Soeda E."/>
            <person name="Ohki M."/>
            <person name="Takagi T."/>
            <person name="Sakaki Y."/>
            <person name="Taudien S."/>
            <person name="Blechschmidt K."/>
            <person name="Polley A."/>
            <person name="Menzel U."/>
            <person name="Delabar J."/>
            <person name="Kumpf K."/>
            <person name="Lehmann R."/>
            <person name="Patterson D."/>
            <person name="Reichwald K."/>
            <person name="Rump A."/>
            <person name="Schillhabel M."/>
            <person name="Schudy A."/>
            <person name="Zimmermann W."/>
            <person name="Rosenthal A."/>
            <person name="Kudoh J."/>
            <person name="Shibuya K."/>
            <person name="Kawasaki K."/>
            <person name="Asakawa S."/>
            <person name="Shintani A."/>
            <person name="Sasaki T."/>
            <person name="Nagamine K."/>
            <person name="Mitsuyama S."/>
            <person name="Antonarakis S.E."/>
            <person name="Minoshima S."/>
            <person name="Shimizu N."/>
            <person name="Nordsiek G."/>
            <person name="Hornischer K."/>
            <person name="Brandt P."/>
            <person name="Scharfe M."/>
            <person name="Schoen O."/>
            <person name="Desario A."/>
            <person name="Reichelt J."/>
            <person name="Kauer G."/>
            <person name="Bloecker H."/>
            <person name="Ramser J."/>
            <person name="Beck A."/>
            <person name="Klages S."/>
            <person name="Hennig S."/>
            <person name="Riesselmann L."/>
            <person name="Dagand E."/>
            <person name="Wehrmeyer S."/>
            <person name="Borzym K."/>
            <person name="Gardiner K."/>
            <person name="Nizetic D."/>
            <person name="Francis F."/>
            <person name="Lehrach H."/>
            <person name="Reinhardt R."/>
            <person name="Yaspo M.-L."/>
        </authorList>
    </citation>
    <scope>NUCLEOTIDE SEQUENCE [LARGE SCALE GENOMIC DNA]</scope>
</reference>
<reference key="8">
    <citation type="journal article" date="2004" name="Genome Res.">
        <title>The status, quality, and expansion of the NIH full-length cDNA project: the Mammalian Gene Collection (MGC).</title>
        <authorList>
            <consortium name="The MGC Project Team"/>
        </authorList>
    </citation>
    <scope>NUCLEOTIDE SEQUENCE [LARGE SCALE MRNA]</scope>
    <source>
        <tissue>Colon</tissue>
        <tissue>Kidney</tissue>
        <tissue>Stomach</tissue>
    </source>
</reference>
<reference key="9">
    <citation type="journal article" date="1988" name="C. R. Acad. Sci. III, Sci. Vie">
        <title>Primary structure of human protein pS2.</title>
        <authorList>
            <person name="Rio M.-C."/>
            <person name="Lepage P."/>
            <person name="Diemunsch P."/>
            <person name="Roitsch C."/>
            <person name="Chambon P."/>
        </authorList>
    </citation>
    <scope>PROTEIN SEQUENCE OF 25-84</scope>
</reference>
<reference key="10">
    <citation type="journal article" date="2005" name="Biochemistry">
        <title>Interaction between TFF1, a gastric tumor suppressor trefoil protein, and TFIZ1, a Brichos domain-containing protein with homology to SP-C.</title>
        <authorList>
            <person name="Westley B.R."/>
            <person name="Griffin S.M."/>
            <person name="May F.E.B."/>
        </authorList>
    </citation>
    <scope>PROTEIN SEQUENCE OF 25-84</scope>
    <scope>SUBCELLULAR LOCATION</scope>
    <scope>TISSUE SPECIFICITY</scope>
    <scope>INTERACTION WITH GKN2</scope>
    <source>
        <tissue>Stomach</tissue>
    </source>
</reference>
<reference key="11">
    <citation type="journal article" date="2005" name="J. Clin. Invest.">
        <title>Identification of human urinary trefoil factor 1 as a novel calcium oxalate crystal growth inhibitor.</title>
        <authorList>
            <person name="Chutipongtanate S."/>
            <person name="Nakagawa Y."/>
            <person name="Sritippayawan S."/>
            <person name="Pittayamateekul J."/>
            <person name="Parichatikanond P."/>
            <person name="Westley B.R."/>
            <person name="May F.E."/>
            <person name="Malasit P."/>
            <person name="Thongboonkerd V."/>
        </authorList>
    </citation>
    <scope>PROTEIN SEQUENCE OF 25-63</scope>
    <scope>FUNCTION</scope>
    <scope>TISSUE SPECIFICITY</scope>
</reference>
<reference key="12">
    <citation type="journal article" date="1988" name="Biochem. Biophys. Res. Commun.">
        <title>Identification of a polypeptide secreted by human breast cancer cells (MCF-7) as the human estrogen-responsive gene (pS2) product.</title>
        <authorList>
            <person name="Mori K."/>
            <person name="Fujii R."/>
            <person name="Kida N."/>
            <person name="Ohta M."/>
            <person name="Hayashi K."/>
        </authorList>
    </citation>
    <scope>PROTEIN SEQUENCE OF 25-60</scope>
</reference>
<reference key="13">
    <citation type="journal article" date="2004" name="Protein Sci.">
        <title>Signal peptide prediction based on analysis of experimentally verified cleavage sites.</title>
        <authorList>
            <person name="Zhang Z."/>
            <person name="Henzel W.J."/>
        </authorList>
    </citation>
    <scope>PROTEIN SEQUENCE OF 25-39</scope>
</reference>
<reference key="14">
    <citation type="journal article" date="1988" name="Science">
        <title>Breast cancer-associated pS2 protein: synthesis and secretion by normal stomach mucosa.</title>
        <authorList>
            <person name="Rio M.C."/>
            <person name="Bellocq J.-P."/>
            <person name="Daniel J.Y."/>
            <person name="Tomasetto C."/>
            <person name="Lathe R."/>
            <person name="Chenard M.P."/>
            <person name="Batzenschlager A."/>
            <person name="Chambon P."/>
        </authorList>
    </citation>
    <scope>TISSUE SPECIFICITY</scope>
    <scope>SUBCELLULAR LOCATION</scope>
</reference>
<reference key="15">
    <citation type="journal article" date="2006" name="World J. Gastroenterol.">
        <title>Expression of trefoil factors 1 and 2 in precancerous condition and gastric cancer.</title>
        <authorList>
            <person name="Shi S.-Q."/>
            <person name="Cai J.-T."/>
            <person name="Yang J.-M."/>
        </authorList>
    </citation>
    <scope>TISSUE SPECIFICITY</scope>
</reference>
<reference key="16">
    <citation type="journal article" date="2006" name="World J. Gastroenterol.">
        <title>Molecular forms of trefoil factor 1 in normal gastric mucosa and its expression in normal and abnormal gastric tissues.</title>
        <authorList>
            <person name="Ren J.L."/>
            <person name="Luo J.-Y."/>
            <person name="Lu Y.-P."/>
            <person name="Wang L."/>
            <person name="Shi H.-X."/>
        </authorList>
    </citation>
    <scope>TISSUE SPECIFICITY</scope>
</reference>
<reference key="17">
    <citation type="journal article" date="2007" name="J. Histochem. Cytochem.">
        <title>Tissue localization of human trefoil factors 1, 2, and 3.</title>
        <authorList>
            <person name="Madsen J."/>
            <person name="Nielsen O."/>
            <person name="Tornoe I."/>
            <person name="Thim L."/>
            <person name="Holmskov U."/>
        </authorList>
    </citation>
    <scope>TISSUE SPECIFICITY</scope>
</reference>
<reference key="18">
    <citation type="journal article" date="1995" name="Eur. J. Biochem.">
        <title>NMR-based structural studies of the pNR-2/pS2 single domain trefoil peptide. Similarities to porcine spasmolytic peptide and evidence for a monomeric structure.</title>
        <authorList>
            <person name="Polshakov V.I."/>
            <person name="Frenkiel T.A."/>
            <person name="Westley B.R."/>
            <person name="Chadwick M.P."/>
            <person name="May F.E.B."/>
            <person name="Carr M.D."/>
            <person name="Feeney J."/>
        </authorList>
    </citation>
    <scope>STRUCTURE BY NMR</scope>
</reference>
<reference key="19">
    <citation type="journal article" date="1997" name="J. Mol. Biol.">
        <title>High-resolution solution structure of human pNR-2/pS2: a single trefoil motif protein.</title>
        <authorList>
            <person name="Polshakov V.I."/>
            <person name="Williams M.A."/>
            <person name="Gargaro A.R."/>
            <person name="Frenkiel T.A."/>
            <person name="Westley B.R."/>
            <person name="Chadwick M.P."/>
            <person name="May F.E.B."/>
            <person name="Feeney J."/>
        </authorList>
    </citation>
    <scope>STRUCTURE BY NMR</scope>
</reference>
<reference key="20">
    <citation type="journal article" date="2000" name="Gastroenterology">
        <title>Somatic mutations of the trefoil factor family 1 gene in gastric cancer.</title>
        <authorList>
            <person name="Park W.-S."/>
            <person name="Oh R.-R."/>
            <person name="Park J.-Y."/>
            <person name="Lee J.-H."/>
            <person name="Shin M.-S."/>
            <person name="Kim H.-S."/>
            <person name="Lee H.-K."/>
            <person name="Kim Y.-S."/>
            <person name="Kim S.-Y."/>
            <person name="Lee S.-H."/>
            <person name="Yoo N.-J."/>
            <person name="Lee J.-Y."/>
        </authorList>
    </citation>
    <scope>VARIANTS ILE-32; LYS-32; ASP-34; LYS-37; ILE-46 AND VAL-55</scope>
</reference>
<reference key="21">
    <citation type="journal article" date="2006" name="Gastroenterology">
        <title>Trefoil factor family-1 mutations enhance gastric cancer cell invasion through distinct signaling pathways.</title>
        <authorList>
            <person name="Yio X."/>
            <person name="Diamond M."/>
            <person name="Zhang J.-Y."/>
            <person name="Weinstein H."/>
            <person name="Wang L.-H."/>
            <person name="Werther L."/>
            <person name="Itzkowitz S."/>
        </authorList>
    </citation>
    <scope>VARIANTS ASP-34 AND LYS-37</scope>
    <scope>MUTAGENESIS OF CYS-82</scope>
</reference>
<organism>
    <name type="scientific">Homo sapiens</name>
    <name type="common">Human</name>
    <dbReference type="NCBI Taxonomy" id="9606"/>
    <lineage>
        <taxon>Eukaryota</taxon>
        <taxon>Metazoa</taxon>
        <taxon>Chordata</taxon>
        <taxon>Craniata</taxon>
        <taxon>Vertebrata</taxon>
        <taxon>Euteleostomi</taxon>
        <taxon>Mammalia</taxon>
        <taxon>Eutheria</taxon>
        <taxon>Euarchontoglires</taxon>
        <taxon>Primates</taxon>
        <taxon>Haplorrhini</taxon>
        <taxon>Catarrhini</taxon>
        <taxon>Hominidae</taxon>
        <taxon>Homo</taxon>
    </lineage>
</organism>